<dbReference type="SMR" id="P56872"/>
<dbReference type="GO" id="GO:0042742">
    <property type="term" value="P:defense response to bacterium"/>
    <property type="evidence" value="ECO:0007669"/>
    <property type="project" value="UniProtKB-KW"/>
</dbReference>
<dbReference type="InterPro" id="IPR005535">
    <property type="entry name" value="Cyclotide"/>
</dbReference>
<dbReference type="InterPro" id="IPR012323">
    <property type="entry name" value="Cyclotide_bracelet_CS"/>
</dbReference>
<dbReference type="InterPro" id="IPR036146">
    <property type="entry name" value="Cyclotide_sf"/>
</dbReference>
<dbReference type="Pfam" id="PF03784">
    <property type="entry name" value="Cyclotide"/>
    <property type="match status" value="1"/>
</dbReference>
<dbReference type="PIRSF" id="PIRSF037891">
    <property type="entry name" value="Cycloviolacin"/>
    <property type="match status" value="1"/>
</dbReference>
<dbReference type="SUPFAM" id="SSF57038">
    <property type="entry name" value="Cyclotides"/>
    <property type="match status" value="1"/>
</dbReference>
<dbReference type="PROSITE" id="PS51052">
    <property type="entry name" value="CYCLOTIDE"/>
    <property type="match status" value="1"/>
</dbReference>
<dbReference type="PROSITE" id="PS60008">
    <property type="entry name" value="CYCLOTIDE_BRACELET"/>
    <property type="match status" value="1"/>
</dbReference>
<feature type="peptide" id="PRO_0000044698" description="Cyclopsychotride-A">
    <location>
        <begin position="1"/>
        <end position="31"/>
    </location>
</feature>
<feature type="disulfide bond" evidence="2">
    <location>
        <begin position="4"/>
        <end position="21"/>
    </location>
</feature>
<feature type="disulfide bond" evidence="2">
    <location>
        <begin position="8"/>
        <end position="23"/>
    </location>
</feature>
<feature type="disulfide bond" evidence="2">
    <location>
        <begin position="13"/>
        <end position="28"/>
    </location>
</feature>
<feature type="cross-link" description="Cyclopeptide (Ser-Asn)">
    <location>
        <begin position="1"/>
        <end position="31"/>
    </location>
</feature>
<proteinExistence type="evidence at protein level"/>
<accession>P56872</accession>
<accession>P82254</accession>
<protein>
    <recommendedName>
        <fullName>Cyclopsychotride-A</fullName>
        <shortName>CPT</shortName>
    </recommendedName>
</protein>
<comment type="function">
    <text>Probably participates in a plant defense mechanism. Has antibiotic activity. Inhibits the cytopathic effects and replication of the human immunodeficiency virus. Active against both Gram-positive and Gram-negative bacteria.</text>
</comment>
<comment type="domain">
    <text evidence="1">The presence of a 'disulfide through disulfide knot' structurally defines this protein as a knottin.</text>
</comment>
<comment type="PTM">
    <text>This is a cyclic peptide.</text>
</comment>
<comment type="similarity">
    <text evidence="2">Belongs to the cyclotide family. Bracelet subfamily.</text>
</comment>
<comment type="caution">
    <text evidence="3">This peptide is cyclic. The start position was chosen by similarity to OAK1 (kalata-B1) for which the DNA sequence is known.</text>
</comment>
<name>CYLA_PSYLO</name>
<evidence type="ECO:0000250" key="1"/>
<evidence type="ECO:0000255" key="2">
    <source>
        <dbReference type="PROSITE-ProRule" id="PRU00395"/>
    </source>
</evidence>
<evidence type="ECO:0000305" key="3"/>
<reference key="1">
    <citation type="journal article" date="1994" name="J. Nat. Prod.">
        <title>Cyclopsychotride A, a biologically active, 31-residue cyclic peptide isolated from Psychotria longipes.</title>
        <authorList>
            <person name="Witherup K.M."/>
            <person name="Bogusky M.J."/>
            <person name="Anderson P.S."/>
            <person name="Ramjit H."/>
            <person name="Ransom R.W."/>
            <person name="Wood T."/>
            <person name="Sardana M."/>
        </authorList>
    </citation>
    <scope>PROTEIN SEQUENCE</scope>
</reference>
<reference key="2">
    <citation type="journal article" date="1999" name="Proc. Natl. Acad. Sci. U.S.A.">
        <title>An unusual structural motif of antimicrobial peptides containing end-to-end macrocycle and cystine-knot disulfides.</title>
        <authorList>
            <person name="Tam J.P."/>
            <person name="Lu Y.-A."/>
            <person name="Yang J.-L."/>
            <person name="Chiu K.-W."/>
        </authorList>
    </citation>
    <scope>SYNTHESIS</scope>
    <scope>ANTIBACTERIAL ACTIVITY</scope>
</reference>
<sequence length="31" mass="3255">SIPCGESCVFIPCTVTALLGCSCKSKVCYKN</sequence>
<keyword id="KW-0044">Antibiotic</keyword>
<keyword id="KW-0929">Antimicrobial</keyword>
<keyword id="KW-0903">Direct protein sequencing</keyword>
<keyword id="KW-1015">Disulfide bond</keyword>
<keyword id="KW-0960">Knottin</keyword>
<keyword id="KW-0611">Plant defense</keyword>
<organism>
    <name type="scientific">Psychotria longipes</name>
    <dbReference type="NCBI Taxonomy" id="41680"/>
    <lineage>
        <taxon>Eukaryota</taxon>
        <taxon>Viridiplantae</taxon>
        <taxon>Streptophyta</taxon>
        <taxon>Embryophyta</taxon>
        <taxon>Tracheophyta</taxon>
        <taxon>Spermatophyta</taxon>
        <taxon>Magnoliopsida</taxon>
        <taxon>eudicotyledons</taxon>
        <taxon>Gunneridae</taxon>
        <taxon>Pentapetalae</taxon>
        <taxon>asterids</taxon>
        <taxon>lamiids</taxon>
        <taxon>Gentianales</taxon>
        <taxon>Rubiaceae</taxon>
        <taxon>Rubioideae</taxon>
        <taxon>Psychotrieae</taxon>
        <taxon>Psychotria</taxon>
    </lineage>
</organism>